<feature type="chain" id="PRO_0000213448" description="Sperm-specific class P protein 10">
    <location>
        <begin position="1"/>
        <end position="109"/>
    </location>
</feature>
<feature type="domain" description="MSP" evidence="1">
    <location>
        <begin position="2"/>
        <end position="109"/>
    </location>
</feature>
<gene>
    <name type="primary">ssp-10</name>
    <name type="ORF">K07F5.9</name>
</gene>
<organism>
    <name type="scientific">Caenorhabditis elegans</name>
    <dbReference type="NCBI Taxonomy" id="6239"/>
    <lineage>
        <taxon>Eukaryota</taxon>
        <taxon>Metazoa</taxon>
        <taxon>Ecdysozoa</taxon>
        <taxon>Nematoda</taxon>
        <taxon>Chromadorea</taxon>
        <taxon>Rhabditida</taxon>
        <taxon>Rhabditina</taxon>
        <taxon>Rhabditomorpha</taxon>
        <taxon>Rhabditoidea</taxon>
        <taxon>Rhabditidae</taxon>
        <taxon>Peloderinae</taxon>
        <taxon>Caenorhabditis</taxon>
    </lineage>
</organism>
<sequence>MSLTADPPACTVPAAGGSSTHKLVNGGAEKIIFKIKSSNNNEYRIAPVFGFVDPSGSKDVVITRTAGAPKEDKLVIHFAPAPADATDAQAAFAAVTPAGTVTIPMSATA</sequence>
<keyword id="KW-1185">Reference proteome</keyword>
<protein>
    <recommendedName>
        <fullName>Sperm-specific class P protein 10</fullName>
    </recommendedName>
</protein>
<proteinExistence type="evidence at transcript level"/>
<dbReference type="EMBL" id="Z70284">
    <property type="protein sequence ID" value="CAA94274.1"/>
    <property type="molecule type" value="Genomic_DNA"/>
</dbReference>
<dbReference type="PIR" id="T23410">
    <property type="entry name" value="T23410"/>
</dbReference>
<dbReference type="RefSeq" id="NP_501767.1">
    <property type="nucleotide sequence ID" value="NM_069366.6"/>
</dbReference>
<dbReference type="SMR" id="Q21289"/>
<dbReference type="FunCoup" id="Q21289">
    <property type="interactions" value="10"/>
</dbReference>
<dbReference type="STRING" id="6239.K07F5.9.3"/>
<dbReference type="PaxDb" id="6239-K07F5.9"/>
<dbReference type="PeptideAtlas" id="Q21289"/>
<dbReference type="EnsemblMetazoa" id="K07F5.9.1">
    <property type="protein sequence ID" value="K07F5.9.1"/>
    <property type="gene ID" value="WBGene00006039"/>
</dbReference>
<dbReference type="GeneID" id="177834"/>
<dbReference type="KEGG" id="cel:CELE_K07F5.9"/>
<dbReference type="UCSC" id="K07F5.9.1">
    <property type="organism name" value="c. elegans"/>
</dbReference>
<dbReference type="AGR" id="WB:WBGene00006039"/>
<dbReference type="CTD" id="177834"/>
<dbReference type="WormBase" id="K07F5.9">
    <property type="protein sequence ID" value="CE06124"/>
    <property type="gene ID" value="WBGene00006039"/>
    <property type="gene designation" value="ssp-10"/>
</dbReference>
<dbReference type="eggNOG" id="ENOG502SQPZ">
    <property type="taxonomic scope" value="Eukaryota"/>
</dbReference>
<dbReference type="GeneTree" id="ENSGT00970000195880"/>
<dbReference type="HOGENOM" id="CLU_147608_1_0_1"/>
<dbReference type="InParanoid" id="Q21289"/>
<dbReference type="OMA" id="DCAKPED"/>
<dbReference type="OrthoDB" id="264603at2759"/>
<dbReference type="PhylomeDB" id="Q21289"/>
<dbReference type="PRO" id="PR:Q21289"/>
<dbReference type="Proteomes" id="UP000001940">
    <property type="component" value="Chromosome IV"/>
</dbReference>
<dbReference type="Bgee" id="WBGene00006039">
    <property type="expression patterns" value="Expressed in adult organism and 1 other cell type or tissue"/>
</dbReference>
<dbReference type="FunFam" id="2.60.40.10:FF:002024">
    <property type="entry name" value="Sperm-specific class P protein 19"/>
    <property type="match status" value="1"/>
</dbReference>
<dbReference type="Gene3D" id="2.60.40.10">
    <property type="entry name" value="Immunoglobulins"/>
    <property type="match status" value="1"/>
</dbReference>
<dbReference type="InterPro" id="IPR013783">
    <property type="entry name" value="Ig-like_fold"/>
</dbReference>
<dbReference type="InterPro" id="IPR000535">
    <property type="entry name" value="MSP_dom"/>
</dbReference>
<dbReference type="InterPro" id="IPR008962">
    <property type="entry name" value="PapD-like_sf"/>
</dbReference>
<dbReference type="InterPro" id="IPR051774">
    <property type="entry name" value="Sperm-specific_class_P"/>
</dbReference>
<dbReference type="PANTHER" id="PTHR22947">
    <property type="entry name" value="MAJOR SPERM PROTEIN"/>
    <property type="match status" value="1"/>
</dbReference>
<dbReference type="PANTHER" id="PTHR22947:SF7">
    <property type="entry name" value="MSP DOMAIN-CONTAINING PROTEIN-RELATED"/>
    <property type="match status" value="1"/>
</dbReference>
<dbReference type="Pfam" id="PF00635">
    <property type="entry name" value="Motile_Sperm"/>
    <property type="match status" value="1"/>
</dbReference>
<dbReference type="SUPFAM" id="SSF49354">
    <property type="entry name" value="PapD-like"/>
    <property type="match status" value="1"/>
</dbReference>
<dbReference type="PROSITE" id="PS50202">
    <property type="entry name" value="MSP"/>
    <property type="match status" value="1"/>
</dbReference>
<name>SSP10_CAEEL</name>
<comment type="tissue specificity">
    <text evidence="2">Expressed at higher level in testis.</text>
</comment>
<accession>Q21289</accession>
<evidence type="ECO:0000255" key="1">
    <source>
        <dbReference type="PROSITE-ProRule" id="PRU00132"/>
    </source>
</evidence>
<evidence type="ECO:0000269" key="2">
    <source>
    </source>
</evidence>
<reference key="1">
    <citation type="journal article" date="1998" name="Science">
        <title>Genome sequence of the nematode C. elegans: a platform for investigating biology.</title>
        <authorList>
            <consortium name="The C. elegans sequencing consortium"/>
        </authorList>
    </citation>
    <scope>NUCLEOTIDE SEQUENCE [LARGE SCALE GENOMIC DNA]</scope>
    <source>
        <strain>Bristol N2</strain>
    </source>
</reference>
<reference key="2">
    <citation type="journal article" date="2004" name="Mol. Biochem. Parasitol.">
        <title>MSP domain proteins show enhanced expression in male germ line cells.</title>
        <authorList>
            <person name="Tarr D.E.K."/>
            <person name="Scott A.L."/>
        </authorList>
    </citation>
    <scope>TISSUE SPECIFICITY</scope>
</reference>